<feature type="chain" id="PRO_0000114744" description="Probable deacetylase AF_0130">
    <location>
        <begin position="1"/>
        <end position="359"/>
    </location>
</feature>
<feature type="active site" description="Proton donor/acceptor" evidence="1">
    <location>
        <position position="126"/>
    </location>
</feature>
<feature type="binding site" evidence="1">
    <location>
        <position position="162"/>
    </location>
    <ligand>
        <name>Zn(2+)</name>
        <dbReference type="ChEBI" id="CHEBI:29105"/>
    </ligand>
</feature>
<feature type="binding site" evidence="1">
    <location>
        <position position="164"/>
    </location>
    <ligand>
        <name>Zn(2+)</name>
        <dbReference type="ChEBI" id="CHEBI:29105"/>
    </ligand>
</feature>
<feature type="binding site" evidence="1">
    <location>
        <position position="249"/>
    </location>
    <ligand>
        <name>Zn(2+)</name>
        <dbReference type="ChEBI" id="CHEBI:29105"/>
    </ligand>
</feature>
<feature type="site" description="Polarizes the scissile carbonyl of the substrate" evidence="1">
    <location>
        <position position="293"/>
    </location>
</feature>
<dbReference type="EC" id="3.5.1.-" evidence="1"/>
<dbReference type="EMBL" id="AE000782">
    <property type="protein sequence ID" value="AAB91099.1"/>
    <property type="molecule type" value="Genomic_DNA"/>
</dbReference>
<dbReference type="PIR" id="B69266">
    <property type="entry name" value="B69266"/>
</dbReference>
<dbReference type="RefSeq" id="WP_010877642.1">
    <property type="nucleotide sequence ID" value="NC_000917.1"/>
</dbReference>
<dbReference type="SMR" id="O30107"/>
<dbReference type="STRING" id="224325.AF_0130"/>
<dbReference type="PaxDb" id="224325-AF_0130"/>
<dbReference type="EnsemblBacteria" id="AAB91099">
    <property type="protein sequence ID" value="AAB91099"/>
    <property type="gene ID" value="AF_0130"/>
</dbReference>
<dbReference type="KEGG" id="afu:AF_0130"/>
<dbReference type="eggNOG" id="arCOG00324">
    <property type="taxonomic scope" value="Archaea"/>
</dbReference>
<dbReference type="HOGENOM" id="CLU_007727_8_2_2"/>
<dbReference type="OrthoDB" id="147549at2157"/>
<dbReference type="PhylomeDB" id="O30107"/>
<dbReference type="Proteomes" id="UP000002199">
    <property type="component" value="Chromosome"/>
</dbReference>
<dbReference type="GO" id="GO:0004407">
    <property type="term" value="F:histone deacetylase activity"/>
    <property type="evidence" value="ECO:0007669"/>
    <property type="project" value="InterPro"/>
</dbReference>
<dbReference type="GO" id="GO:0016787">
    <property type="term" value="F:hydrolase activity"/>
    <property type="evidence" value="ECO:0007669"/>
    <property type="project" value="UniProtKB-KW"/>
</dbReference>
<dbReference type="GO" id="GO:0046872">
    <property type="term" value="F:metal ion binding"/>
    <property type="evidence" value="ECO:0007669"/>
    <property type="project" value="UniProtKB-KW"/>
</dbReference>
<dbReference type="GO" id="GO:0040029">
    <property type="term" value="P:epigenetic regulation of gene expression"/>
    <property type="evidence" value="ECO:0007669"/>
    <property type="project" value="TreeGrafter"/>
</dbReference>
<dbReference type="CDD" id="cd09992">
    <property type="entry name" value="HDAC_classII"/>
    <property type="match status" value="1"/>
</dbReference>
<dbReference type="Gene3D" id="3.40.800.20">
    <property type="entry name" value="Histone deacetylase domain"/>
    <property type="match status" value="1"/>
</dbReference>
<dbReference type="InterPro" id="IPR050284">
    <property type="entry name" value="HDAC_PDAC"/>
</dbReference>
<dbReference type="InterPro" id="IPR000286">
    <property type="entry name" value="His_deacetylse"/>
</dbReference>
<dbReference type="InterPro" id="IPR003084">
    <property type="entry name" value="His_deacetylse_1"/>
</dbReference>
<dbReference type="InterPro" id="IPR023801">
    <property type="entry name" value="His_deacetylse_dom"/>
</dbReference>
<dbReference type="InterPro" id="IPR037138">
    <property type="entry name" value="His_deacetylse_dom_sf"/>
</dbReference>
<dbReference type="InterPro" id="IPR023696">
    <property type="entry name" value="Ureohydrolase_dom_sf"/>
</dbReference>
<dbReference type="PANTHER" id="PTHR10625">
    <property type="entry name" value="HISTONE DEACETYLASE HDAC1-RELATED"/>
    <property type="match status" value="1"/>
</dbReference>
<dbReference type="Pfam" id="PF00850">
    <property type="entry name" value="Hist_deacetyl"/>
    <property type="match status" value="1"/>
</dbReference>
<dbReference type="PRINTS" id="PR01270">
    <property type="entry name" value="HDASUPER"/>
</dbReference>
<dbReference type="PRINTS" id="PR01271">
    <property type="entry name" value="HISDACETLASE"/>
</dbReference>
<dbReference type="SUPFAM" id="SSF52768">
    <property type="entry name" value="Arginase/deacetylase"/>
    <property type="match status" value="1"/>
</dbReference>
<proteinExistence type="inferred from homology"/>
<sequence length="359" mass="40468">MVTGIVFHEEYLKHEQSPTHPERRERLAYTMDQLREEGIFESERIVLLEPFKASLEDVLEVHTEEYVRFLEMESKKGGIIDFDTNIPVGVFDRALLAAGGAIRAAQAVLNKECENAFAMIRPPGHHAKPYIGAGFCYLNNMAIMVKWLLKQGFERIAILDWDAHHGDGTQEIFYNDDRVLFISTHQMPLYPGTGYPEECGTGKGEGYTVNIPLPPGTGDEGYMMVIDEIIEPVVNEFKPQFIAISAGQDNHFTDPITSLALTARGYAEMMRRAVAMAEKHCDGRLVAVLEGGYSVEGALPYTNLGIIAAMAGFDLSAIREPENYLPELLWRKRDSALVKLKHNIEDVKRVHSKYWKCFK</sequence>
<reference key="1">
    <citation type="journal article" date="1997" name="Nature">
        <title>The complete genome sequence of the hyperthermophilic, sulphate-reducing archaeon Archaeoglobus fulgidus.</title>
        <authorList>
            <person name="Klenk H.-P."/>
            <person name="Clayton R.A."/>
            <person name="Tomb J.-F."/>
            <person name="White O."/>
            <person name="Nelson K.E."/>
            <person name="Ketchum K.A."/>
            <person name="Dodson R.J."/>
            <person name="Gwinn M.L."/>
            <person name="Hickey E.K."/>
            <person name="Peterson J.D."/>
            <person name="Richardson D.L."/>
            <person name="Kerlavage A.R."/>
            <person name="Graham D.E."/>
            <person name="Kyrpides N.C."/>
            <person name="Fleischmann R.D."/>
            <person name="Quackenbush J."/>
            <person name="Lee N.H."/>
            <person name="Sutton G.G."/>
            <person name="Gill S.R."/>
            <person name="Kirkness E.F."/>
            <person name="Dougherty B.A."/>
            <person name="McKenney K."/>
            <person name="Adams M.D."/>
            <person name="Loftus B.J."/>
            <person name="Peterson S.N."/>
            <person name="Reich C.I."/>
            <person name="McNeil L.K."/>
            <person name="Badger J.H."/>
            <person name="Glodek A."/>
            <person name="Zhou L."/>
            <person name="Overbeek R."/>
            <person name="Gocayne J.D."/>
            <person name="Weidman J.F."/>
            <person name="McDonald L.A."/>
            <person name="Utterback T.R."/>
            <person name="Cotton M.D."/>
            <person name="Spriggs T."/>
            <person name="Artiach P."/>
            <person name="Kaine B.P."/>
            <person name="Sykes S.M."/>
            <person name="Sadow P.W."/>
            <person name="D'Andrea K.P."/>
            <person name="Bowman C."/>
            <person name="Fujii C."/>
            <person name="Garland S.A."/>
            <person name="Mason T.M."/>
            <person name="Olsen G.J."/>
            <person name="Fraser C.M."/>
            <person name="Smith H.O."/>
            <person name="Woese C.R."/>
            <person name="Venter J.C."/>
        </authorList>
    </citation>
    <scope>NUCLEOTIDE SEQUENCE [LARGE SCALE GENOMIC DNA]</scope>
    <source>
        <strain>ATCC 49558 / DSM 4304 / JCM 9628 / NBRC 100126 / VC-16</strain>
    </source>
</reference>
<evidence type="ECO:0000250" key="1">
    <source>
        <dbReference type="UniProtKB" id="Q48935"/>
    </source>
</evidence>
<evidence type="ECO:0000305" key="2"/>
<protein>
    <recommendedName>
        <fullName evidence="2">Probable deacetylase AF_0130</fullName>
        <ecNumber evidence="1">3.5.1.-</ecNumber>
    </recommendedName>
</protein>
<accession>O30107</accession>
<gene>
    <name type="ordered locus">AF_0130</name>
</gene>
<keyword id="KW-0378">Hydrolase</keyword>
<keyword id="KW-0479">Metal-binding</keyword>
<keyword id="KW-1185">Reference proteome</keyword>
<keyword id="KW-0862">Zinc</keyword>
<organism>
    <name type="scientific">Archaeoglobus fulgidus (strain ATCC 49558 / DSM 4304 / JCM 9628 / NBRC 100126 / VC-16)</name>
    <dbReference type="NCBI Taxonomy" id="224325"/>
    <lineage>
        <taxon>Archaea</taxon>
        <taxon>Methanobacteriati</taxon>
        <taxon>Methanobacteriota</taxon>
        <taxon>Archaeoglobi</taxon>
        <taxon>Archaeoglobales</taxon>
        <taxon>Archaeoglobaceae</taxon>
        <taxon>Archaeoglobus</taxon>
    </lineage>
</organism>
<name>Y130_ARCFU</name>
<comment type="function">
    <text evidence="1">Probable deacetylase.</text>
</comment>
<comment type="cofactor">
    <cofactor evidence="1">
        <name>Zn(2+)</name>
        <dbReference type="ChEBI" id="CHEBI:29105"/>
    </cofactor>
    <text evidence="1">Binds 1 zinc ion per subunit.</text>
</comment>
<comment type="similarity">
    <text evidence="2">Belongs to the histone deacetylase family.</text>
</comment>